<accession>Q8BH16</accession>
<accession>Q8BXM4</accession>
<evidence type="ECO:0000250" key="1">
    <source>
        <dbReference type="UniProtKB" id="Q9UKC9"/>
    </source>
</evidence>
<evidence type="ECO:0000255" key="2">
    <source>
        <dbReference type="PROSITE-ProRule" id="PRU00080"/>
    </source>
</evidence>
<evidence type="ECO:0000269" key="3">
    <source>
    </source>
</evidence>
<evidence type="ECO:0000269" key="4">
    <source>
    </source>
</evidence>
<evidence type="ECO:0000303" key="5">
    <source>
    </source>
</evidence>
<evidence type="ECO:0000305" key="6"/>
<evidence type="ECO:0000312" key="7">
    <source>
        <dbReference type="MGI" id="MGI:1919429"/>
    </source>
</evidence>
<reference key="1">
    <citation type="journal article" date="2005" name="Science">
        <title>The transcriptional landscape of the mammalian genome.</title>
        <authorList>
            <person name="Carninci P."/>
            <person name="Kasukawa T."/>
            <person name="Katayama S."/>
            <person name="Gough J."/>
            <person name="Frith M.C."/>
            <person name="Maeda N."/>
            <person name="Oyama R."/>
            <person name="Ravasi T."/>
            <person name="Lenhard B."/>
            <person name="Wells C."/>
            <person name="Kodzius R."/>
            <person name="Shimokawa K."/>
            <person name="Bajic V.B."/>
            <person name="Brenner S.E."/>
            <person name="Batalov S."/>
            <person name="Forrest A.R."/>
            <person name="Zavolan M."/>
            <person name="Davis M.J."/>
            <person name="Wilming L.G."/>
            <person name="Aidinis V."/>
            <person name="Allen J.E."/>
            <person name="Ambesi-Impiombato A."/>
            <person name="Apweiler R."/>
            <person name="Aturaliya R.N."/>
            <person name="Bailey T.L."/>
            <person name="Bansal M."/>
            <person name="Baxter L."/>
            <person name="Beisel K.W."/>
            <person name="Bersano T."/>
            <person name="Bono H."/>
            <person name="Chalk A.M."/>
            <person name="Chiu K.P."/>
            <person name="Choudhary V."/>
            <person name="Christoffels A."/>
            <person name="Clutterbuck D.R."/>
            <person name="Crowe M.L."/>
            <person name="Dalla E."/>
            <person name="Dalrymple B.P."/>
            <person name="de Bono B."/>
            <person name="Della Gatta G."/>
            <person name="di Bernardo D."/>
            <person name="Down T."/>
            <person name="Engstrom P."/>
            <person name="Fagiolini M."/>
            <person name="Faulkner G."/>
            <person name="Fletcher C.F."/>
            <person name="Fukushima T."/>
            <person name="Furuno M."/>
            <person name="Futaki S."/>
            <person name="Gariboldi M."/>
            <person name="Georgii-Hemming P."/>
            <person name="Gingeras T.R."/>
            <person name="Gojobori T."/>
            <person name="Green R.E."/>
            <person name="Gustincich S."/>
            <person name="Harbers M."/>
            <person name="Hayashi Y."/>
            <person name="Hensch T.K."/>
            <person name="Hirokawa N."/>
            <person name="Hill D."/>
            <person name="Huminiecki L."/>
            <person name="Iacono M."/>
            <person name="Ikeo K."/>
            <person name="Iwama A."/>
            <person name="Ishikawa T."/>
            <person name="Jakt M."/>
            <person name="Kanapin A."/>
            <person name="Katoh M."/>
            <person name="Kawasawa Y."/>
            <person name="Kelso J."/>
            <person name="Kitamura H."/>
            <person name="Kitano H."/>
            <person name="Kollias G."/>
            <person name="Krishnan S.P."/>
            <person name="Kruger A."/>
            <person name="Kummerfeld S.K."/>
            <person name="Kurochkin I.V."/>
            <person name="Lareau L.F."/>
            <person name="Lazarevic D."/>
            <person name="Lipovich L."/>
            <person name="Liu J."/>
            <person name="Liuni S."/>
            <person name="McWilliam S."/>
            <person name="Madan Babu M."/>
            <person name="Madera M."/>
            <person name="Marchionni L."/>
            <person name="Matsuda H."/>
            <person name="Matsuzawa S."/>
            <person name="Miki H."/>
            <person name="Mignone F."/>
            <person name="Miyake S."/>
            <person name="Morris K."/>
            <person name="Mottagui-Tabar S."/>
            <person name="Mulder N."/>
            <person name="Nakano N."/>
            <person name="Nakauchi H."/>
            <person name="Ng P."/>
            <person name="Nilsson R."/>
            <person name="Nishiguchi S."/>
            <person name="Nishikawa S."/>
            <person name="Nori F."/>
            <person name="Ohara O."/>
            <person name="Okazaki Y."/>
            <person name="Orlando V."/>
            <person name="Pang K.C."/>
            <person name="Pavan W.J."/>
            <person name="Pavesi G."/>
            <person name="Pesole G."/>
            <person name="Petrovsky N."/>
            <person name="Piazza S."/>
            <person name="Reed J."/>
            <person name="Reid J.F."/>
            <person name="Ring B.Z."/>
            <person name="Ringwald M."/>
            <person name="Rost B."/>
            <person name="Ruan Y."/>
            <person name="Salzberg S.L."/>
            <person name="Sandelin A."/>
            <person name="Schneider C."/>
            <person name="Schoenbach C."/>
            <person name="Sekiguchi K."/>
            <person name="Semple C.A."/>
            <person name="Seno S."/>
            <person name="Sessa L."/>
            <person name="Sheng Y."/>
            <person name="Shibata Y."/>
            <person name="Shimada H."/>
            <person name="Shimada K."/>
            <person name="Silva D."/>
            <person name="Sinclair B."/>
            <person name="Sperling S."/>
            <person name="Stupka E."/>
            <person name="Sugiura K."/>
            <person name="Sultana R."/>
            <person name="Takenaka Y."/>
            <person name="Taki K."/>
            <person name="Tammoja K."/>
            <person name="Tan S.L."/>
            <person name="Tang S."/>
            <person name="Taylor M.S."/>
            <person name="Tegner J."/>
            <person name="Teichmann S.A."/>
            <person name="Ueda H.R."/>
            <person name="van Nimwegen E."/>
            <person name="Verardo R."/>
            <person name="Wei C.L."/>
            <person name="Yagi K."/>
            <person name="Yamanishi H."/>
            <person name="Zabarovsky E."/>
            <person name="Zhu S."/>
            <person name="Zimmer A."/>
            <person name="Hide W."/>
            <person name="Bult C."/>
            <person name="Grimmond S.M."/>
            <person name="Teasdale R.D."/>
            <person name="Liu E.T."/>
            <person name="Brusic V."/>
            <person name="Quackenbush J."/>
            <person name="Wahlestedt C."/>
            <person name="Mattick J.S."/>
            <person name="Hume D.A."/>
            <person name="Kai C."/>
            <person name="Sasaki D."/>
            <person name="Tomaru Y."/>
            <person name="Fukuda S."/>
            <person name="Kanamori-Katayama M."/>
            <person name="Suzuki M."/>
            <person name="Aoki J."/>
            <person name="Arakawa T."/>
            <person name="Iida J."/>
            <person name="Imamura K."/>
            <person name="Itoh M."/>
            <person name="Kato T."/>
            <person name="Kawaji H."/>
            <person name="Kawagashira N."/>
            <person name="Kawashima T."/>
            <person name="Kojima M."/>
            <person name="Kondo S."/>
            <person name="Konno H."/>
            <person name="Nakano K."/>
            <person name="Ninomiya N."/>
            <person name="Nishio T."/>
            <person name="Okada M."/>
            <person name="Plessy C."/>
            <person name="Shibata K."/>
            <person name="Shiraki T."/>
            <person name="Suzuki S."/>
            <person name="Tagami M."/>
            <person name="Waki K."/>
            <person name="Watahiki A."/>
            <person name="Okamura-Oho Y."/>
            <person name="Suzuki H."/>
            <person name="Kawai J."/>
            <person name="Hayashizaki Y."/>
        </authorList>
    </citation>
    <scope>NUCLEOTIDE SEQUENCE [LARGE SCALE MRNA]</scope>
    <source>
        <strain>C57BL/6J</strain>
        <tissue>Brain</tissue>
        <tissue>Hypothalamus</tissue>
        <tissue>Retina</tissue>
    </source>
</reference>
<reference key="2">
    <citation type="journal article" date="2011" name="Mol. Cell. Biol.">
        <title>Calmodulin antagonizes a calcium-activated SCF ubiquitin E3 ligase subunit, FBXL2, to regulate surfactant homeostasis.</title>
        <authorList>
            <person name="Chen B.B."/>
            <person name="Coon T.A."/>
            <person name="Glasser J.R."/>
            <person name="Mallampalli R.K."/>
        </authorList>
    </citation>
    <scope>FUNCTION</scope>
    <scope>INTERACTION WITH PCYT1A AND CALMODULIN</scope>
    <scope>MISCELLANEOUS</scope>
</reference>
<reference key="3">
    <citation type="journal article" date="2013" name="Nat. Immunol.">
        <title>A combinatorial F box protein directed pathway controls TRAF adaptor stability to regulate inflammation.</title>
        <authorList>
            <person name="Chen B.B."/>
            <person name="Coon T.A."/>
            <person name="Glasser J.R."/>
            <person name="McVerry B.J."/>
            <person name="Zhao J."/>
            <person name="Zhao Y."/>
            <person name="Zou C."/>
            <person name="Ellis B."/>
            <person name="Sciurba F.C."/>
            <person name="Zhang Y."/>
            <person name="Mallampalli R.K."/>
        </authorList>
    </citation>
    <scope>FUNCTION</scope>
    <scope>CATALYTIC ACTIVITY</scope>
    <scope>PATHWAY</scope>
    <scope>UBIQUITINATION AT LYS-201</scope>
    <scope>PHOSPHORYLATION AT THR-404</scope>
    <scope>MUTAGENESIS OF THR-404</scope>
</reference>
<gene>
    <name evidence="5 7" type="primary">Fbxl2</name>
</gene>
<keyword id="KW-0106">Calcium</keyword>
<keyword id="KW-0112">Calmodulin-binding</keyword>
<keyword id="KW-1017">Isopeptide bond</keyword>
<keyword id="KW-0433">Leucine-rich repeat</keyword>
<keyword id="KW-0449">Lipoprotein</keyword>
<keyword id="KW-0472">Membrane</keyword>
<keyword id="KW-0597">Phosphoprotein</keyword>
<keyword id="KW-0636">Prenylation</keyword>
<keyword id="KW-1185">Reference proteome</keyword>
<keyword id="KW-0677">Repeat</keyword>
<keyword id="KW-0832">Ubl conjugation</keyword>
<keyword id="KW-0833">Ubl conjugation pathway</keyword>
<protein>
    <recommendedName>
        <fullName evidence="6">F-box/LRR-repeat protein 2</fullName>
    </recommendedName>
    <alternativeName>
        <fullName evidence="5">F-box and leucine-rich repeat protein 2</fullName>
    </alternativeName>
</protein>
<feature type="chain" id="PRO_0000119841" description="F-box/LRR-repeat protein 2">
    <location>
        <begin position="1"/>
        <end position="423"/>
    </location>
</feature>
<feature type="domain" description="F-box" evidence="2">
    <location>
        <begin position="9"/>
        <end position="55"/>
    </location>
</feature>
<feature type="repeat" description="LRR 1">
    <location>
        <begin position="61"/>
        <end position="87"/>
    </location>
</feature>
<feature type="repeat" description="LRR 2">
    <location>
        <begin position="88"/>
        <end position="113"/>
    </location>
</feature>
<feature type="repeat" description="LRR 3">
    <location>
        <begin position="114"/>
        <end position="139"/>
    </location>
</feature>
<feature type="repeat" description="LRR 4">
    <location>
        <begin position="140"/>
        <end position="165"/>
    </location>
</feature>
<feature type="repeat" description="LRR 5">
    <location>
        <begin position="166"/>
        <end position="191"/>
    </location>
</feature>
<feature type="repeat" description="LRR 6">
    <location>
        <begin position="192"/>
        <end position="217"/>
    </location>
</feature>
<feature type="repeat" description="LRR 7">
    <location>
        <begin position="218"/>
        <end position="243"/>
    </location>
</feature>
<feature type="repeat" description="LRR 8">
    <location>
        <begin position="244"/>
        <end position="269"/>
    </location>
</feature>
<feature type="repeat" description="LRR 9">
    <location>
        <begin position="270"/>
        <end position="295"/>
    </location>
</feature>
<feature type="repeat" description="LRR 10">
    <location>
        <begin position="296"/>
        <end position="321"/>
    </location>
</feature>
<feature type="repeat" description="LRR 11">
    <location>
        <begin position="322"/>
        <end position="350"/>
    </location>
</feature>
<feature type="repeat" description="LRR 12">
    <location>
        <begin position="351"/>
        <end position="375"/>
    </location>
</feature>
<feature type="repeat" description="LRR 13">
    <location>
        <begin position="376"/>
        <end position="401"/>
    </location>
</feature>
<feature type="region of interest" description="Interaction with Calmodulin" evidence="3">
    <location>
        <begin position="80"/>
        <end position="90"/>
    </location>
</feature>
<feature type="short sequence motif" description="CAAX motif">
    <location>
        <begin position="420"/>
        <end position="423"/>
    </location>
</feature>
<feature type="modified residue" description="Phosphothreonine; by GSK3-beta" evidence="4">
    <location>
        <position position="404"/>
    </location>
</feature>
<feature type="lipid moiety-binding region" description="S-geranylgeranyl cysteine" evidence="1">
    <location>
        <position position="420"/>
    </location>
</feature>
<feature type="cross-link" description="Glycyl lysine isopeptide (Lys-Gly) (interchain with G-Cter in ubiquitin)" evidence="4">
    <location>
        <position position="201"/>
    </location>
</feature>
<feature type="mutagenesis site" description="Abolished phosphorylation by GSK3B, preventing ubiquitination by the SCF(FBXO3) complex." evidence="4">
    <original>T</original>
    <variation>A</variation>
    <location>
        <position position="404"/>
    </location>
</feature>
<feature type="sequence conflict" description="In Ref. 1; BAC32036." evidence="6" ref="1">
    <original>G</original>
    <variation>S</variation>
    <location>
        <position position="277"/>
    </location>
</feature>
<sequence>MVFSNSDDGLINKKLPKELLLRIFSFLDIVTLCRCAQISKAWNILALDGSNWQRVDLFNFQTDVEGRVVENISKRCGGFLRKLSLRGCIGVGDSSLKTFAQNCRNIEHLNLNGCTKITDSTCYSLSRFCSKLKHLDLTSCVSVTNSSLKGISEGCRNLEYLNLSWCDQITKEGIEALVRGCRGLKALLLRGCTQLEDEALKHIQNHCHELVSLNLQSCSRITDDGVVQICRGCHRLQALCLSGCSNLTDASLTALGLNCPRLQVLEAARCSHLTDAGFTLLARNCHELEKMDLEECVLITDSTLVQLSIHCPKLQALSLSHCELITDEGILHLSSSTCGHERLRVLELDNCLLVTDASLEHLENCRGLERLELYDCQQVTRAGIKRMRAQLPHVKVHAYFAPVTPPPAVAGSGHRLCRCCVIL</sequence>
<name>FBXL2_MOUSE</name>
<organism>
    <name type="scientific">Mus musculus</name>
    <name type="common">Mouse</name>
    <dbReference type="NCBI Taxonomy" id="10090"/>
    <lineage>
        <taxon>Eukaryota</taxon>
        <taxon>Metazoa</taxon>
        <taxon>Chordata</taxon>
        <taxon>Craniata</taxon>
        <taxon>Vertebrata</taxon>
        <taxon>Euteleostomi</taxon>
        <taxon>Mammalia</taxon>
        <taxon>Eutheria</taxon>
        <taxon>Euarchontoglires</taxon>
        <taxon>Glires</taxon>
        <taxon>Rodentia</taxon>
        <taxon>Myomorpha</taxon>
        <taxon>Muroidea</taxon>
        <taxon>Muridae</taxon>
        <taxon>Murinae</taxon>
        <taxon>Mus</taxon>
        <taxon>Mus</taxon>
    </lineage>
</organism>
<comment type="function">
    <text evidence="1 3 4">Calcium-activated substrate recognition component of the SCF (SKP1-cullin-F-box protein) E3 ubiquitin-protein ligase complex, SCF(FBXL2), which mediates the ubiquitination and subsequent proteasomal degradation of target proteins (PubMed:21343341, PubMed:23542741). Unlike many F-box proteins, FBXL2 does not seem to target phosphodegron within its substrates but rather calmodulin-binding motifs and is thereby antagonized by calmodulin (By similarity). This is the case for the cyclins CCND2 and CCND3 which polyubiquitination and subsequent degradation are inhibited by calmodulin (By similarity). Through CCND2 and CCND3 degradation induces cell-cycle arrest in G(0) (By similarity). SCF(FBXL2) also mediates PIK3R2 ubiquitination and proteasomal degradation thereby regulating phosphatidylinositol 3-kinase signaling and autophagy (By similarity). PCYT1A monoubiquitination by SCF(FBXL2) and subsequent degradation regulates synthesis of phosphatidylcholine, which is utilized for formation of membranes and of pulmonary surfactant (PubMed:21343341). The SCF(FBXL2) complex acts as a regulator of inflammation by mediating ubiquitination and degradation of TRAF proteins (TRAF1, TRAF2, TRAF3, TRAF4, TRAF5 and TRAF6) (PubMed:23542741). The SCF(FBXL2) complex acts as a negative regulator of the NLRP3 inflammasome by mediating ubiquitination and degradation of NLRP3 (By similarity).</text>
</comment>
<comment type="pathway">
    <text evidence="4">Protein modification; protein ubiquitination.</text>
</comment>
<comment type="subunit">
    <text evidence="1">Part of the SCF (SKP1-CUL1-F-box) E3 ubiquitin-protein ligase complex SCF(FBXL2) composed of CUL1, SKP1, RBX1 and FBXL2. Interacts with calmodulin; may antagonize substrate ubiquitination by SCF(FBXL2). May interact with PIK3R1. Interacts with PTPN13.</text>
</comment>
<comment type="subcellular location">
    <subcellularLocation>
        <location evidence="1">Membrane</location>
        <topology evidence="1">Lipid-anchor</topology>
    </subcellularLocation>
</comment>
<comment type="domain">
    <text evidence="1">The CAAX motif is a signal for the geranylgeranylation of FBXL2 and is required for its association with cell membranes and the recruitment of substrates to the active SCF(FBXL2) complex.</text>
</comment>
<comment type="PTM">
    <text evidence="4">Phosphorylated by GSK-beta (GSK3B), promoting recognition by FBXO3, leading to its ubiquitination by the SCF(FBXO3) complex.</text>
</comment>
<comment type="PTM">
    <text evidence="4">Ubiquitinated at Lys-201 by the SCF(FBXO3) complex in response to lipopolysaccharide (LPS), leading to its degradation by the proteasome.</text>
</comment>
<comment type="miscellaneous">
    <text evidence="3">May play a role in P. Aeruginosa-induced surfactant deficiency by inhibiting PCYT1A in a calcium-dependent manner.</text>
</comment>
<proteinExistence type="evidence at protein level"/>
<dbReference type="EMBL" id="AK039010">
    <property type="protein sequence ID" value="BAC30203.1"/>
    <property type="molecule type" value="mRNA"/>
</dbReference>
<dbReference type="EMBL" id="AK044693">
    <property type="protein sequence ID" value="BAC32036.1"/>
    <property type="molecule type" value="mRNA"/>
</dbReference>
<dbReference type="EMBL" id="AK045742">
    <property type="protein sequence ID" value="BAC32477.1"/>
    <property type="molecule type" value="mRNA"/>
</dbReference>
<dbReference type="EMBL" id="AK089994">
    <property type="protein sequence ID" value="BAC41033.1"/>
    <property type="molecule type" value="mRNA"/>
</dbReference>
<dbReference type="CCDS" id="CCDS40790.1"/>
<dbReference type="RefSeq" id="NP_848739.1">
    <property type="nucleotide sequence ID" value="NM_178624.7"/>
</dbReference>
<dbReference type="SMR" id="Q8BH16"/>
<dbReference type="BioGRID" id="215202">
    <property type="interactions" value="4"/>
</dbReference>
<dbReference type="FunCoup" id="Q8BH16">
    <property type="interactions" value="60"/>
</dbReference>
<dbReference type="STRING" id="10090.ENSMUSP00000035090"/>
<dbReference type="GlyGen" id="Q8BH16">
    <property type="glycosylation" value="2 sites, 1 N-linked glycan (1 site)"/>
</dbReference>
<dbReference type="iPTMnet" id="Q8BH16"/>
<dbReference type="PhosphoSitePlus" id="Q8BH16"/>
<dbReference type="PaxDb" id="10090-ENSMUSP00000035090"/>
<dbReference type="ProteomicsDB" id="270972"/>
<dbReference type="Pumba" id="Q8BH16"/>
<dbReference type="Antibodypedia" id="27896">
    <property type="antibodies" value="173 antibodies from 27 providers"/>
</dbReference>
<dbReference type="DNASU" id="72179"/>
<dbReference type="Ensembl" id="ENSMUST00000035090.14">
    <property type="protein sequence ID" value="ENSMUSP00000035090.8"/>
    <property type="gene ID" value="ENSMUSG00000032507.16"/>
</dbReference>
<dbReference type="Ensembl" id="ENSMUST00000117537.8">
    <property type="protein sequence ID" value="ENSMUSP00000114075.2"/>
    <property type="gene ID" value="ENSMUSG00000032507.16"/>
</dbReference>
<dbReference type="GeneID" id="72179"/>
<dbReference type="KEGG" id="mmu:72179"/>
<dbReference type="UCSC" id="uc009rxa.1">
    <property type="organism name" value="mouse"/>
</dbReference>
<dbReference type="AGR" id="MGI:1919429"/>
<dbReference type="CTD" id="25827"/>
<dbReference type="MGI" id="MGI:1919429">
    <property type="gene designation" value="Fbxl2"/>
</dbReference>
<dbReference type="VEuPathDB" id="HostDB:ENSMUSG00000032507"/>
<dbReference type="eggNOG" id="KOG4341">
    <property type="taxonomic scope" value="Eukaryota"/>
</dbReference>
<dbReference type="GeneTree" id="ENSGT00940000153845"/>
<dbReference type="HOGENOM" id="CLU_016072_7_1_1"/>
<dbReference type="InParanoid" id="Q8BH16"/>
<dbReference type="OMA" id="LGCPQME"/>
<dbReference type="OrthoDB" id="550575at2759"/>
<dbReference type="PhylomeDB" id="Q8BH16"/>
<dbReference type="TreeFam" id="TF313434"/>
<dbReference type="UniPathway" id="UPA00143"/>
<dbReference type="BioGRID-ORCS" id="72179">
    <property type="hits" value="0 hits in 78 CRISPR screens"/>
</dbReference>
<dbReference type="ChiTaRS" id="Fbxl2">
    <property type="organism name" value="mouse"/>
</dbReference>
<dbReference type="PRO" id="PR:Q8BH16"/>
<dbReference type="Proteomes" id="UP000000589">
    <property type="component" value="Chromosome 9"/>
</dbReference>
<dbReference type="RNAct" id="Q8BH16">
    <property type="molecule type" value="protein"/>
</dbReference>
<dbReference type="Bgee" id="ENSMUSG00000032507">
    <property type="expression patterns" value="Expressed in lumbar dorsal root ganglion and 128 other cell types or tissues"/>
</dbReference>
<dbReference type="ExpressionAtlas" id="Q8BH16">
    <property type="expression patterns" value="baseline and differential"/>
</dbReference>
<dbReference type="GO" id="GO:0016020">
    <property type="term" value="C:membrane"/>
    <property type="evidence" value="ECO:0000250"/>
    <property type="project" value="UniProtKB"/>
</dbReference>
<dbReference type="GO" id="GO:0019005">
    <property type="term" value="C:SCF ubiquitin ligase complex"/>
    <property type="evidence" value="ECO:0000250"/>
    <property type="project" value="UniProtKB"/>
</dbReference>
<dbReference type="GO" id="GO:0005516">
    <property type="term" value="F:calmodulin binding"/>
    <property type="evidence" value="ECO:0007669"/>
    <property type="project" value="UniProtKB-KW"/>
</dbReference>
<dbReference type="GO" id="GO:0036312">
    <property type="term" value="F:phosphatidylinositol 3-kinase regulatory subunit binding"/>
    <property type="evidence" value="ECO:0007669"/>
    <property type="project" value="Ensembl"/>
</dbReference>
<dbReference type="GO" id="GO:0019903">
    <property type="term" value="F:protein phosphatase binding"/>
    <property type="evidence" value="ECO:0007669"/>
    <property type="project" value="Ensembl"/>
</dbReference>
<dbReference type="GO" id="GO:1990756">
    <property type="term" value="F:ubiquitin-like ligase-substrate adaptor activity"/>
    <property type="evidence" value="ECO:0000314"/>
    <property type="project" value="UniProtKB"/>
</dbReference>
<dbReference type="GO" id="GO:0044830">
    <property type="term" value="P:modulation by host of viral RNA genome replication"/>
    <property type="evidence" value="ECO:0007669"/>
    <property type="project" value="Ensembl"/>
</dbReference>
<dbReference type="GO" id="GO:1900226">
    <property type="term" value="P:negative regulation of NLRP3 inflammasome complex assembly"/>
    <property type="evidence" value="ECO:0000250"/>
    <property type="project" value="UniProtKB"/>
</dbReference>
<dbReference type="GO" id="GO:0006513">
    <property type="term" value="P:protein monoubiquitination"/>
    <property type="evidence" value="ECO:0000315"/>
    <property type="project" value="MGI"/>
</dbReference>
<dbReference type="GO" id="GO:0016567">
    <property type="term" value="P:protein ubiquitination"/>
    <property type="evidence" value="ECO:0000250"/>
    <property type="project" value="UniProtKB"/>
</dbReference>
<dbReference type="GO" id="GO:0010506">
    <property type="term" value="P:regulation of autophagy"/>
    <property type="evidence" value="ECO:0000250"/>
    <property type="project" value="UniProtKB"/>
</dbReference>
<dbReference type="GO" id="GO:0050727">
    <property type="term" value="P:regulation of inflammatory response"/>
    <property type="evidence" value="ECO:0000314"/>
    <property type="project" value="UniProtKB"/>
</dbReference>
<dbReference type="GO" id="GO:0051896">
    <property type="term" value="P:regulation of phosphatidylinositol 3-kinase/protein kinase B signal transduction"/>
    <property type="evidence" value="ECO:0000250"/>
    <property type="project" value="UniProtKB"/>
</dbReference>
<dbReference type="GO" id="GO:0031146">
    <property type="term" value="P:SCF-dependent proteasomal ubiquitin-dependent protein catabolic process"/>
    <property type="evidence" value="ECO:0000314"/>
    <property type="project" value="UniProtKB"/>
</dbReference>
<dbReference type="GO" id="GO:0006511">
    <property type="term" value="P:ubiquitin-dependent protein catabolic process"/>
    <property type="evidence" value="ECO:0000315"/>
    <property type="project" value="MGI"/>
</dbReference>
<dbReference type="CDD" id="cd22115">
    <property type="entry name" value="F-box_FBXL2-like"/>
    <property type="match status" value="1"/>
</dbReference>
<dbReference type="FunFam" id="3.80.10.10:FF:000042">
    <property type="entry name" value="F-box/LRR-repeat protein 20 isoform 2"/>
    <property type="match status" value="1"/>
</dbReference>
<dbReference type="FunFam" id="3.80.10.10:FF:000060">
    <property type="entry name" value="F-box/LRR-repeat protein 20 isoform 2"/>
    <property type="match status" value="1"/>
</dbReference>
<dbReference type="FunFam" id="1.20.1280.50:FF:000013">
    <property type="entry name" value="F-box/LRR-repeat protein 20 isoform X1"/>
    <property type="match status" value="1"/>
</dbReference>
<dbReference type="Gene3D" id="3.80.10.10">
    <property type="entry name" value="Ribonuclease Inhibitor"/>
    <property type="match status" value="2"/>
</dbReference>
<dbReference type="InterPro" id="IPR001810">
    <property type="entry name" value="F-box_dom"/>
</dbReference>
<dbReference type="InterPro" id="IPR050648">
    <property type="entry name" value="F-box_LRR-repeat"/>
</dbReference>
<dbReference type="InterPro" id="IPR001611">
    <property type="entry name" value="Leu-rich_rpt"/>
</dbReference>
<dbReference type="InterPro" id="IPR006553">
    <property type="entry name" value="Leu-rich_rpt_Cys-con_subtyp"/>
</dbReference>
<dbReference type="InterPro" id="IPR032675">
    <property type="entry name" value="LRR_dom_sf"/>
</dbReference>
<dbReference type="PANTHER" id="PTHR13382:SF40">
    <property type="entry name" value="F-BOX_LRR-REPEAT PROTEIN 2"/>
    <property type="match status" value="1"/>
</dbReference>
<dbReference type="PANTHER" id="PTHR13382">
    <property type="entry name" value="MITOCHONDRIAL ATP SYNTHASE COUPLING FACTOR B"/>
    <property type="match status" value="1"/>
</dbReference>
<dbReference type="Pfam" id="PF12937">
    <property type="entry name" value="F-box-like"/>
    <property type="match status" value="1"/>
</dbReference>
<dbReference type="Pfam" id="PF13516">
    <property type="entry name" value="LRR_6"/>
    <property type="match status" value="5"/>
</dbReference>
<dbReference type="SMART" id="SM00256">
    <property type="entry name" value="FBOX"/>
    <property type="match status" value="1"/>
</dbReference>
<dbReference type="SMART" id="SM00367">
    <property type="entry name" value="LRR_CC"/>
    <property type="match status" value="11"/>
</dbReference>
<dbReference type="SUPFAM" id="SSF52047">
    <property type="entry name" value="RNI-like"/>
    <property type="match status" value="1"/>
</dbReference>
<dbReference type="PROSITE" id="PS50181">
    <property type="entry name" value="FBOX"/>
    <property type="match status" value="1"/>
</dbReference>